<gene>
    <name evidence="1" type="primary">dtd</name>
    <name type="ordered locus">SE_1314</name>
</gene>
<comment type="function">
    <text evidence="1">An aminoacyl-tRNA editing enzyme that deacylates mischarged D-aminoacyl-tRNAs. Also deacylates mischarged glycyl-tRNA(Ala), protecting cells against glycine mischarging by AlaRS. Acts via tRNA-based rather than protein-based catalysis; rejects L-amino acids rather than detecting D-amino acids in the active site. By recycling D-aminoacyl-tRNA to D-amino acids and free tRNA molecules, this enzyme counteracts the toxicity associated with the formation of D-aminoacyl-tRNA entities in vivo and helps enforce protein L-homochirality.</text>
</comment>
<comment type="catalytic activity">
    <reaction evidence="1">
        <text>glycyl-tRNA(Ala) + H2O = tRNA(Ala) + glycine + H(+)</text>
        <dbReference type="Rhea" id="RHEA:53744"/>
        <dbReference type="Rhea" id="RHEA-COMP:9657"/>
        <dbReference type="Rhea" id="RHEA-COMP:13640"/>
        <dbReference type="ChEBI" id="CHEBI:15377"/>
        <dbReference type="ChEBI" id="CHEBI:15378"/>
        <dbReference type="ChEBI" id="CHEBI:57305"/>
        <dbReference type="ChEBI" id="CHEBI:78442"/>
        <dbReference type="ChEBI" id="CHEBI:78522"/>
        <dbReference type="EC" id="3.1.1.96"/>
    </reaction>
</comment>
<comment type="catalytic activity">
    <reaction evidence="1">
        <text>a D-aminoacyl-tRNA + H2O = a tRNA + a D-alpha-amino acid + H(+)</text>
        <dbReference type="Rhea" id="RHEA:13953"/>
        <dbReference type="Rhea" id="RHEA-COMP:10123"/>
        <dbReference type="Rhea" id="RHEA-COMP:10124"/>
        <dbReference type="ChEBI" id="CHEBI:15377"/>
        <dbReference type="ChEBI" id="CHEBI:15378"/>
        <dbReference type="ChEBI" id="CHEBI:59871"/>
        <dbReference type="ChEBI" id="CHEBI:78442"/>
        <dbReference type="ChEBI" id="CHEBI:79333"/>
        <dbReference type="EC" id="3.1.1.96"/>
    </reaction>
</comment>
<comment type="subunit">
    <text evidence="1">Homodimer.</text>
</comment>
<comment type="subcellular location">
    <subcellularLocation>
        <location evidence="1">Cytoplasm</location>
    </subcellularLocation>
</comment>
<comment type="domain">
    <text evidence="1">A Gly-cisPro motif from one monomer fits into the active site of the other monomer to allow specific chiral rejection of L-amino acids.</text>
</comment>
<comment type="similarity">
    <text evidence="1">Belongs to the DTD family.</text>
</comment>
<proteinExistence type="inferred from homology"/>
<dbReference type="EC" id="3.1.1.96" evidence="1"/>
<dbReference type="EMBL" id="AE015929">
    <property type="protein sequence ID" value="AAO04913.1"/>
    <property type="molecule type" value="Genomic_DNA"/>
</dbReference>
<dbReference type="RefSeq" id="NP_764869.1">
    <property type="nucleotide sequence ID" value="NC_004461.1"/>
</dbReference>
<dbReference type="RefSeq" id="WP_001830766.1">
    <property type="nucleotide sequence ID" value="NZ_WBME01000059.1"/>
</dbReference>
<dbReference type="SMR" id="Q8CP01"/>
<dbReference type="GeneID" id="50018569"/>
<dbReference type="KEGG" id="sep:SE_1314"/>
<dbReference type="PATRIC" id="fig|176280.10.peg.1283"/>
<dbReference type="eggNOG" id="COG1490">
    <property type="taxonomic scope" value="Bacteria"/>
</dbReference>
<dbReference type="HOGENOM" id="CLU_076901_1_0_9"/>
<dbReference type="OrthoDB" id="9801395at2"/>
<dbReference type="Proteomes" id="UP000001411">
    <property type="component" value="Chromosome"/>
</dbReference>
<dbReference type="GO" id="GO:0005737">
    <property type="term" value="C:cytoplasm"/>
    <property type="evidence" value="ECO:0007669"/>
    <property type="project" value="UniProtKB-SubCell"/>
</dbReference>
<dbReference type="GO" id="GO:0051500">
    <property type="term" value="F:D-tyrosyl-tRNA(Tyr) deacylase activity"/>
    <property type="evidence" value="ECO:0007669"/>
    <property type="project" value="TreeGrafter"/>
</dbReference>
<dbReference type="GO" id="GO:0106026">
    <property type="term" value="F:Gly-tRNA(Ala) deacylase activity"/>
    <property type="evidence" value="ECO:0007669"/>
    <property type="project" value="UniProtKB-UniRule"/>
</dbReference>
<dbReference type="GO" id="GO:0043908">
    <property type="term" value="F:Ser(Gly)-tRNA(Ala) hydrolase activity"/>
    <property type="evidence" value="ECO:0007669"/>
    <property type="project" value="UniProtKB-UniRule"/>
</dbReference>
<dbReference type="GO" id="GO:0000049">
    <property type="term" value="F:tRNA binding"/>
    <property type="evidence" value="ECO:0007669"/>
    <property type="project" value="UniProtKB-UniRule"/>
</dbReference>
<dbReference type="GO" id="GO:0019478">
    <property type="term" value="P:D-amino acid catabolic process"/>
    <property type="evidence" value="ECO:0007669"/>
    <property type="project" value="UniProtKB-UniRule"/>
</dbReference>
<dbReference type="FunFam" id="3.50.80.10:FF:000001">
    <property type="entry name" value="D-aminoacyl-tRNA deacylase"/>
    <property type="match status" value="1"/>
</dbReference>
<dbReference type="Gene3D" id="3.50.80.10">
    <property type="entry name" value="D-tyrosyl-tRNA(Tyr) deacylase"/>
    <property type="match status" value="1"/>
</dbReference>
<dbReference type="HAMAP" id="MF_00518">
    <property type="entry name" value="Deacylase_Dtd"/>
    <property type="match status" value="1"/>
</dbReference>
<dbReference type="InterPro" id="IPR003732">
    <property type="entry name" value="Daa-tRNA_deacyls_DTD"/>
</dbReference>
<dbReference type="InterPro" id="IPR023509">
    <property type="entry name" value="DTD-like_sf"/>
</dbReference>
<dbReference type="NCBIfam" id="TIGR00256">
    <property type="entry name" value="D-aminoacyl-tRNA deacylase"/>
    <property type="match status" value="1"/>
</dbReference>
<dbReference type="PANTHER" id="PTHR10472:SF5">
    <property type="entry name" value="D-AMINOACYL-TRNA DEACYLASE 1"/>
    <property type="match status" value="1"/>
</dbReference>
<dbReference type="PANTHER" id="PTHR10472">
    <property type="entry name" value="D-TYROSYL-TRNA TYR DEACYLASE"/>
    <property type="match status" value="1"/>
</dbReference>
<dbReference type="Pfam" id="PF02580">
    <property type="entry name" value="Tyr_Deacylase"/>
    <property type="match status" value="1"/>
</dbReference>
<dbReference type="SUPFAM" id="SSF69500">
    <property type="entry name" value="DTD-like"/>
    <property type="match status" value="1"/>
</dbReference>
<evidence type="ECO:0000255" key="1">
    <source>
        <dbReference type="HAMAP-Rule" id="MF_00518"/>
    </source>
</evidence>
<organism>
    <name type="scientific">Staphylococcus epidermidis (strain ATCC 12228 / FDA PCI 1200)</name>
    <dbReference type="NCBI Taxonomy" id="176280"/>
    <lineage>
        <taxon>Bacteria</taxon>
        <taxon>Bacillati</taxon>
        <taxon>Bacillota</taxon>
        <taxon>Bacilli</taxon>
        <taxon>Bacillales</taxon>
        <taxon>Staphylococcaceae</taxon>
        <taxon>Staphylococcus</taxon>
    </lineage>
</organism>
<reference key="1">
    <citation type="journal article" date="2003" name="Mol. Microbiol.">
        <title>Genome-based analysis of virulence genes in a non-biofilm-forming Staphylococcus epidermidis strain (ATCC 12228).</title>
        <authorList>
            <person name="Zhang Y.-Q."/>
            <person name="Ren S.-X."/>
            <person name="Li H.-L."/>
            <person name="Wang Y.-X."/>
            <person name="Fu G."/>
            <person name="Yang J."/>
            <person name="Qin Z.-Q."/>
            <person name="Miao Y.-G."/>
            <person name="Wang W.-Y."/>
            <person name="Chen R.-S."/>
            <person name="Shen Y."/>
            <person name="Chen Z."/>
            <person name="Yuan Z.-H."/>
            <person name="Zhao G.-P."/>
            <person name="Qu D."/>
            <person name="Danchin A."/>
            <person name="Wen Y.-M."/>
        </authorList>
    </citation>
    <scope>NUCLEOTIDE SEQUENCE [LARGE SCALE GENOMIC DNA]</scope>
    <source>
        <strain>ATCC 12228 / FDA PCI 1200</strain>
    </source>
</reference>
<sequence length="150" mass="16829">MKIIVQRVKNARVTNDTIDNQINKGYCLLVGVGQNSTEEDVKVIARKIAHARLFEDENDKLNLNIQQVEGEILSVSQFTIYADVKKGNRPGFSNSKAPEQAKDLYQKFNKELEGYGLIVKTGEFGTHMNVEINNDGPVTLIYESQDGKII</sequence>
<keyword id="KW-0963">Cytoplasm</keyword>
<keyword id="KW-0378">Hydrolase</keyword>
<keyword id="KW-0694">RNA-binding</keyword>
<keyword id="KW-0820">tRNA-binding</keyword>
<feature type="chain" id="PRO_0000164592" description="D-aminoacyl-tRNA deacylase">
    <location>
        <begin position="1"/>
        <end position="150"/>
    </location>
</feature>
<feature type="short sequence motif" description="Gly-cisPro motif, important for rejection of L-amino acids" evidence="1">
    <location>
        <begin position="136"/>
        <end position="137"/>
    </location>
</feature>
<accession>Q8CP01</accession>
<name>DTD_STAES</name>
<protein>
    <recommendedName>
        <fullName evidence="1">D-aminoacyl-tRNA deacylase</fullName>
        <shortName evidence="1">DTD</shortName>
        <ecNumber evidence="1">3.1.1.96</ecNumber>
    </recommendedName>
    <alternativeName>
        <fullName evidence="1">Gly-tRNA(Ala) deacylase</fullName>
    </alternativeName>
</protein>